<organism>
    <name type="scientific">Lactococcus lactis subsp. lactis (strain IL1403)</name>
    <name type="common">Streptococcus lactis</name>
    <dbReference type="NCBI Taxonomy" id="272623"/>
    <lineage>
        <taxon>Bacteria</taxon>
        <taxon>Bacillati</taxon>
        <taxon>Bacillota</taxon>
        <taxon>Bacilli</taxon>
        <taxon>Lactobacillales</taxon>
        <taxon>Streptococcaceae</taxon>
        <taxon>Lactococcus</taxon>
    </lineage>
</organism>
<name>DHAQ_LACLA</name>
<accession>Q9CIW0</accession>
<feature type="chain" id="PRO_0000270536" description="DhaKLM operon coactivator DhaQ">
    <location>
        <begin position="1"/>
        <end position="328"/>
    </location>
</feature>
<feature type="domain" description="DhaK" evidence="1">
    <location>
        <begin position="6"/>
        <end position="328"/>
    </location>
</feature>
<feature type="modified residue" description="Tele-(1,2,3-trihydroxypropan-2-yl)histidine">
    <location>
        <position position="215"/>
    </location>
</feature>
<feature type="helix" evidence="4">
    <location>
        <begin position="12"/>
        <end position="21"/>
    </location>
</feature>
<feature type="strand" evidence="4">
    <location>
        <begin position="25"/>
        <end position="28"/>
    </location>
</feature>
<feature type="turn" evidence="4">
    <location>
        <begin position="29"/>
        <end position="32"/>
    </location>
</feature>
<feature type="strand" evidence="4">
    <location>
        <begin position="33"/>
        <end position="36"/>
    </location>
</feature>
<feature type="strand" evidence="4">
    <location>
        <begin position="41"/>
        <end position="43"/>
    </location>
</feature>
<feature type="strand" evidence="4">
    <location>
        <begin position="46"/>
        <end position="54"/>
    </location>
</feature>
<feature type="turn" evidence="4">
    <location>
        <begin position="55"/>
        <end position="58"/>
    </location>
</feature>
<feature type="helix" evidence="4">
    <location>
        <begin position="59"/>
        <end position="61"/>
    </location>
</feature>
<feature type="strand" evidence="4">
    <location>
        <begin position="66"/>
        <end position="75"/>
    </location>
</feature>
<feature type="helix" evidence="4">
    <location>
        <begin position="81"/>
        <end position="91"/>
    </location>
</feature>
<feature type="strand" evidence="4">
    <location>
        <begin position="93"/>
        <end position="95"/>
    </location>
</feature>
<feature type="strand" evidence="4">
    <location>
        <begin position="97"/>
        <end position="103"/>
    </location>
</feature>
<feature type="helix" evidence="4">
    <location>
        <begin position="105"/>
        <end position="120"/>
    </location>
</feature>
<feature type="strand" evidence="4">
    <location>
        <begin position="125"/>
        <end position="130"/>
    </location>
</feature>
<feature type="helix" evidence="4">
    <location>
        <begin position="135"/>
        <end position="139"/>
    </location>
</feature>
<feature type="helix" evidence="4">
    <location>
        <begin position="151"/>
        <end position="163"/>
    </location>
</feature>
<feature type="helix" evidence="4">
    <location>
        <begin position="168"/>
        <end position="178"/>
    </location>
</feature>
<feature type="helix" evidence="4">
    <location>
        <begin position="179"/>
        <end position="181"/>
    </location>
</feature>
<feature type="strand" evidence="4">
    <location>
        <begin position="182"/>
        <end position="190"/>
    </location>
</feature>
<feature type="turn" evidence="4">
    <location>
        <begin position="195"/>
        <end position="197"/>
    </location>
</feature>
<feature type="strand" evidence="4">
    <location>
        <begin position="198"/>
        <end position="201"/>
    </location>
</feature>
<feature type="strand" evidence="4">
    <location>
        <begin position="207"/>
        <end position="211"/>
    </location>
</feature>
<feature type="strand" evidence="4">
    <location>
        <begin position="220"/>
        <end position="224"/>
    </location>
</feature>
<feature type="helix" evidence="4">
    <location>
        <begin position="228"/>
        <end position="243"/>
    </location>
</feature>
<feature type="helix" evidence="4">
    <location>
        <begin position="245"/>
        <end position="247"/>
    </location>
</feature>
<feature type="strand" evidence="4">
    <location>
        <begin position="252"/>
        <end position="259"/>
    </location>
</feature>
<feature type="strand" evidence="4">
    <location>
        <begin position="261"/>
        <end position="263"/>
    </location>
</feature>
<feature type="helix" evidence="4">
    <location>
        <begin position="265"/>
        <end position="281"/>
    </location>
</feature>
<feature type="strand" evidence="4">
    <location>
        <begin position="285"/>
        <end position="292"/>
    </location>
</feature>
<feature type="strand" evidence="4">
    <location>
        <begin position="300"/>
        <end position="309"/>
    </location>
</feature>
<feature type="helix" evidence="4">
    <location>
        <begin position="314"/>
        <end position="320"/>
    </location>
</feature>
<keyword id="KW-0002">3D-structure</keyword>
<keyword id="KW-1185">Reference proteome</keyword>
<keyword id="KW-0804">Transcription</keyword>
<keyword id="KW-0805">Transcription regulation</keyword>
<protein>
    <recommendedName>
        <fullName>DhaKLM operon coactivator DhaQ</fullName>
    </recommendedName>
    <alternativeName>
        <fullName>DhaS coactivator DhaQ</fullName>
    </alternativeName>
</protein>
<gene>
    <name type="primary">dhaQ</name>
    <name type="ordered locus">LL0246</name>
    <name type="ORF">L44063</name>
</gene>
<dbReference type="EMBL" id="AE005176">
    <property type="protein sequence ID" value="AAK04344.1"/>
    <property type="status" value="ALT_INIT"/>
    <property type="molecule type" value="Genomic_DNA"/>
</dbReference>
<dbReference type="PIR" id="F86655">
    <property type="entry name" value="F86655"/>
</dbReference>
<dbReference type="RefSeq" id="NP_266402.2">
    <property type="nucleotide sequence ID" value="NC_002662.1"/>
</dbReference>
<dbReference type="RefSeq" id="WP_010905234.1">
    <property type="nucleotide sequence ID" value="NC_002662.1"/>
</dbReference>
<dbReference type="PDB" id="2IU4">
    <property type="method" value="X-ray"/>
    <property type="resolution" value="1.96 A"/>
    <property type="chains" value="A/B=1-328"/>
</dbReference>
<dbReference type="PDB" id="2IU6">
    <property type="method" value="X-ray"/>
    <property type="resolution" value="2.00 A"/>
    <property type="chains" value="A/B=1-328"/>
</dbReference>
<dbReference type="PDBsum" id="2IU4"/>
<dbReference type="PDBsum" id="2IU6"/>
<dbReference type="SMR" id="Q9CIW0"/>
<dbReference type="PaxDb" id="272623-L44063"/>
<dbReference type="EnsemblBacteria" id="AAK04344">
    <property type="protein sequence ID" value="AAK04344"/>
    <property type="gene ID" value="L44063"/>
</dbReference>
<dbReference type="KEGG" id="lla:L44063"/>
<dbReference type="PATRIC" id="fig|272623.7.peg.271"/>
<dbReference type="eggNOG" id="COG2376">
    <property type="taxonomic scope" value="Bacteria"/>
</dbReference>
<dbReference type="HOGENOM" id="CLU_017054_0_2_9"/>
<dbReference type="OrthoDB" id="9806345at2"/>
<dbReference type="EvolutionaryTrace" id="Q9CIW0"/>
<dbReference type="Proteomes" id="UP000002196">
    <property type="component" value="Chromosome"/>
</dbReference>
<dbReference type="GO" id="GO:0005829">
    <property type="term" value="C:cytosol"/>
    <property type="evidence" value="ECO:0007669"/>
    <property type="project" value="TreeGrafter"/>
</dbReference>
<dbReference type="GO" id="GO:0004371">
    <property type="term" value="F:glycerone kinase activity"/>
    <property type="evidence" value="ECO:0007669"/>
    <property type="project" value="InterPro"/>
</dbReference>
<dbReference type="GO" id="GO:0019563">
    <property type="term" value="P:glycerol catabolic process"/>
    <property type="evidence" value="ECO:0007669"/>
    <property type="project" value="TreeGrafter"/>
</dbReference>
<dbReference type="FunFam" id="3.40.50.10440:FF:000001">
    <property type="entry name" value="Dihydroxyacetone kinase, DhaK subunit"/>
    <property type="match status" value="1"/>
</dbReference>
<dbReference type="Gene3D" id="3.40.50.10440">
    <property type="entry name" value="Dihydroxyacetone kinase, domain 1"/>
    <property type="match status" value="1"/>
</dbReference>
<dbReference type="Gene3D" id="3.30.1180.20">
    <property type="entry name" value="Dihydroxyacetone kinase, domain 2"/>
    <property type="match status" value="1"/>
</dbReference>
<dbReference type="InterPro" id="IPR012735">
    <property type="entry name" value="DhaK_1b"/>
</dbReference>
<dbReference type="InterPro" id="IPR004006">
    <property type="entry name" value="DhaK_dom"/>
</dbReference>
<dbReference type="InterPro" id="IPR050861">
    <property type="entry name" value="Dihydroxyacetone_Kinase"/>
</dbReference>
<dbReference type="NCBIfam" id="TIGR02362">
    <property type="entry name" value="dhaK1b"/>
    <property type="match status" value="1"/>
</dbReference>
<dbReference type="PANTHER" id="PTHR28629">
    <property type="entry name" value="TRIOKINASE/FMN CYCLASE"/>
    <property type="match status" value="1"/>
</dbReference>
<dbReference type="PANTHER" id="PTHR28629:SF4">
    <property type="entry name" value="TRIOKINASE_FMN CYCLASE"/>
    <property type="match status" value="1"/>
</dbReference>
<dbReference type="Pfam" id="PF02733">
    <property type="entry name" value="Dak1"/>
    <property type="match status" value="1"/>
</dbReference>
<dbReference type="SUPFAM" id="SSF82549">
    <property type="entry name" value="DAK1/DegV-like"/>
    <property type="match status" value="1"/>
</dbReference>
<dbReference type="PROSITE" id="PS51481">
    <property type="entry name" value="DHAK"/>
    <property type="match status" value="1"/>
</dbReference>
<reference key="1">
    <citation type="journal article" date="2001" name="Genome Res.">
        <title>The complete genome sequence of the lactic acid bacterium Lactococcus lactis ssp. lactis IL1403.</title>
        <authorList>
            <person name="Bolotin A."/>
            <person name="Wincker P."/>
            <person name="Mauger S."/>
            <person name="Jaillon O."/>
            <person name="Malarme K."/>
            <person name="Weissenbach J."/>
            <person name="Ehrlich S.D."/>
            <person name="Sorokin A."/>
        </authorList>
    </citation>
    <scope>NUCLEOTIDE SEQUENCE [LARGE SCALE GENOMIC DNA]</scope>
    <source>
        <strain>IL1403</strain>
    </source>
</reference>
<reference key="2">
    <citation type="journal article" date="2006" name="J. Biol. Chem.">
        <title>Regulation of the Dha operon of Lactococcus lactis: a deviation from the rule followed by the Tetr family of transcription regulators.</title>
        <authorList>
            <person name="Christen S."/>
            <person name="Srinivas A."/>
            <person name="Baehler P."/>
            <person name="Zeller A."/>
            <person name="Pridmore D."/>
            <person name="Bieniossek C."/>
            <person name="Baumann U."/>
            <person name="Erni B."/>
        </authorList>
    </citation>
    <scope>X-RAY CRYSTALLOGRAPHY (1.96 ANGSTROMS) IN COMPLEX WITH GLYCEROL</scope>
    <scope>FUNCTION</scope>
    <scope>SUBUNIT</scope>
</reference>
<evidence type="ECO:0000255" key="1">
    <source>
        <dbReference type="PROSITE-ProRule" id="PRU00814"/>
    </source>
</evidence>
<evidence type="ECO:0000269" key="2">
    <source>
    </source>
</evidence>
<evidence type="ECO:0000305" key="3"/>
<evidence type="ECO:0007829" key="4">
    <source>
        <dbReference type="PDB" id="2IU4"/>
    </source>
</evidence>
<comment type="function">
    <text evidence="2">Coactivator for the transcription factor DhaS. The heterotetramer formed by DhaQ and DhaS functions as a transcriptional regulator. Activated by covalent binding of dihydroxyacetone to DhaQ. The complex activates the dhaKLM operon.</text>
</comment>
<comment type="subunit">
    <text evidence="2">Homodimer. Interacts with a homodimer of DhaS.</text>
</comment>
<comment type="sequence caution" evidence="3">
    <conflict type="erroneous initiation">
        <sequence resource="EMBL-CDS" id="AAK04344"/>
    </conflict>
</comment>
<proteinExistence type="evidence at protein level"/>
<sequence length="328" mass="36236">MKFYNSTNEIPEEMLKGIDLTYPQLTYLPETGILYDNTYNEKTVPIISGGGSGHEPAHVGYVGSGMLAAAVTGPLFIPPKSKNILKAIRQVNSGKGVFVIIKNFEADLKEFNEAIKEARTEGIDVRYIVSHDDISVNAYNFHKRHRGVAGTILLHKILGAFAKEGGSIDEIEQLALSLSPEIYTLGVALAPVHFPHQKTSFVLAEDEVSFGIGIHGEPGYRVEKFEGSERIAIELVNKLKAEINWQKKANKNYILLVNGLGSTTLMELYSFQYDVMRLLELEGLSVKFCKVGNLMTSCDMSGISLTLCSVKDPKWLDYLNVPTGAFAW</sequence>